<reference key="1">
    <citation type="submission" date="2007-03" db="EMBL/GenBank/DDBJ databases">
        <title>Complete sequence of chromosome 1 of Burkholderia vietnamiensis G4.</title>
        <authorList>
            <consortium name="US DOE Joint Genome Institute"/>
            <person name="Copeland A."/>
            <person name="Lucas S."/>
            <person name="Lapidus A."/>
            <person name="Barry K."/>
            <person name="Detter J.C."/>
            <person name="Glavina del Rio T."/>
            <person name="Hammon N."/>
            <person name="Israni S."/>
            <person name="Dalin E."/>
            <person name="Tice H."/>
            <person name="Pitluck S."/>
            <person name="Chain P."/>
            <person name="Malfatti S."/>
            <person name="Shin M."/>
            <person name="Vergez L."/>
            <person name="Schmutz J."/>
            <person name="Larimer F."/>
            <person name="Land M."/>
            <person name="Hauser L."/>
            <person name="Kyrpides N."/>
            <person name="Tiedje J."/>
            <person name="Richardson P."/>
        </authorList>
    </citation>
    <scope>NUCLEOTIDE SEQUENCE [LARGE SCALE GENOMIC DNA]</scope>
    <source>
        <strain>G4 / LMG 22486</strain>
    </source>
</reference>
<sequence length="874" mass="95430">MKAAEIREKFLKFFESKGHTIVRSSSLVPGNDPTLMFTNSGMVQFKDVFLGTDQRPYTRATTAQRSVRAGGKHNDLENVGYTARHHTFFEMLGNFSFGDYFKHDAIRFAWELLTTVYQLPKDKLWVTVYQEDDEAYDIWAKEVGVPAERIIRIGDNKGARYASDNFWTMGDTGPCGPCTEIFYDHGPDVWGGPPGSPEEDGDRYIEIWNLVFMQFNRDAQGNMTRLPKQSVDTGMGLERLAAVLQHVHSNYEIDLFQNLIKAAARVTETADLNNNSLKVIADHIRACSFLIVDGVIPGNEGRGYVLRRIVRRAIRHGYKLGRKGAFFHKLVADLVAEMGAAYPELKEAEQRVTDVLRQEEERFFETIEHGMSILEAALADVEAKGGKVLDGELAFKLHDTYGFPLDLTADVCRERGMTVDEPAFDDAMARQREQARAAGKFKATQGLEYTGAKTTFHGYEEIAFDDAKVVALYVEGSSVGEVKAGQDAVVVLDHTPFYAESGGQVGDQGVLANAATRFAVADTLKVQADVIGHHGTLEQGTLKVGDVLRAEIDAQRRARTQRNHSATHLMHKALREVLGAHVQQKGSLVDADKTRFDFAHNAPLTDDEIRRVEQIVNDEILANAPGIVRVMPYDEAVKGGAMALFGEKYGDEVRVLDLGFSRELCGGTHVQRTGDIGLFKIVVEGGVAAGIRRVEAITGDNAVRYVQELDARVNEAAAALKAQPSELTQRIAQVQEQVKSLEKELGALKSKLASSQGDELAQQAVEVGGVFVLAATLDGADAKTLRETVDKLKYKLKSAAIVLAAVEGGKVSLIAGVTPEASKKVKAGELVNFVAQQVGGKGGGRPDMAQAGGTEPANLPGALAGVKGWIEARL</sequence>
<gene>
    <name evidence="1" type="primary">alaS</name>
    <name type="ordered locus">Bcep1808_1373</name>
</gene>
<accession>A4JDM9</accession>
<feature type="chain" id="PRO_0000347535" description="Alanine--tRNA ligase">
    <location>
        <begin position="1"/>
        <end position="874"/>
    </location>
</feature>
<feature type="binding site" evidence="1">
    <location>
        <position position="564"/>
    </location>
    <ligand>
        <name>Zn(2+)</name>
        <dbReference type="ChEBI" id="CHEBI:29105"/>
    </ligand>
</feature>
<feature type="binding site" evidence="1">
    <location>
        <position position="568"/>
    </location>
    <ligand>
        <name>Zn(2+)</name>
        <dbReference type="ChEBI" id="CHEBI:29105"/>
    </ligand>
</feature>
<feature type="binding site" evidence="1">
    <location>
        <position position="665"/>
    </location>
    <ligand>
        <name>Zn(2+)</name>
        <dbReference type="ChEBI" id="CHEBI:29105"/>
    </ligand>
</feature>
<feature type="binding site" evidence="1">
    <location>
        <position position="669"/>
    </location>
    <ligand>
        <name>Zn(2+)</name>
        <dbReference type="ChEBI" id="CHEBI:29105"/>
    </ligand>
</feature>
<organism>
    <name type="scientific">Burkholderia vietnamiensis (strain G4 / LMG 22486)</name>
    <name type="common">Burkholderia cepacia (strain R1808)</name>
    <dbReference type="NCBI Taxonomy" id="269482"/>
    <lineage>
        <taxon>Bacteria</taxon>
        <taxon>Pseudomonadati</taxon>
        <taxon>Pseudomonadota</taxon>
        <taxon>Betaproteobacteria</taxon>
        <taxon>Burkholderiales</taxon>
        <taxon>Burkholderiaceae</taxon>
        <taxon>Burkholderia</taxon>
        <taxon>Burkholderia cepacia complex</taxon>
    </lineage>
</organism>
<dbReference type="EC" id="6.1.1.7" evidence="1"/>
<dbReference type="EMBL" id="CP000614">
    <property type="protein sequence ID" value="ABO54382.1"/>
    <property type="molecule type" value="Genomic_DNA"/>
</dbReference>
<dbReference type="SMR" id="A4JDM9"/>
<dbReference type="KEGG" id="bvi:Bcep1808_1373"/>
<dbReference type="eggNOG" id="COG0013">
    <property type="taxonomic scope" value="Bacteria"/>
</dbReference>
<dbReference type="HOGENOM" id="CLU_004485_1_1_4"/>
<dbReference type="Proteomes" id="UP000002287">
    <property type="component" value="Chromosome 1"/>
</dbReference>
<dbReference type="GO" id="GO:0005829">
    <property type="term" value="C:cytosol"/>
    <property type="evidence" value="ECO:0007669"/>
    <property type="project" value="TreeGrafter"/>
</dbReference>
<dbReference type="GO" id="GO:0004813">
    <property type="term" value="F:alanine-tRNA ligase activity"/>
    <property type="evidence" value="ECO:0007669"/>
    <property type="project" value="UniProtKB-UniRule"/>
</dbReference>
<dbReference type="GO" id="GO:0002161">
    <property type="term" value="F:aminoacyl-tRNA deacylase activity"/>
    <property type="evidence" value="ECO:0007669"/>
    <property type="project" value="TreeGrafter"/>
</dbReference>
<dbReference type="GO" id="GO:0005524">
    <property type="term" value="F:ATP binding"/>
    <property type="evidence" value="ECO:0007669"/>
    <property type="project" value="UniProtKB-UniRule"/>
</dbReference>
<dbReference type="GO" id="GO:0000049">
    <property type="term" value="F:tRNA binding"/>
    <property type="evidence" value="ECO:0007669"/>
    <property type="project" value="UniProtKB-KW"/>
</dbReference>
<dbReference type="GO" id="GO:0008270">
    <property type="term" value="F:zinc ion binding"/>
    <property type="evidence" value="ECO:0007669"/>
    <property type="project" value="UniProtKB-UniRule"/>
</dbReference>
<dbReference type="GO" id="GO:0006419">
    <property type="term" value="P:alanyl-tRNA aminoacylation"/>
    <property type="evidence" value="ECO:0007669"/>
    <property type="project" value="UniProtKB-UniRule"/>
</dbReference>
<dbReference type="GO" id="GO:0045892">
    <property type="term" value="P:negative regulation of DNA-templated transcription"/>
    <property type="evidence" value="ECO:0007669"/>
    <property type="project" value="TreeGrafter"/>
</dbReference>
<dbReference type="CDD" id="cd00673">
    <property type="entry name" value="AlaRS_core"/>
    <property type="match status" value="1"/>
</dbReference>
<dbReference type="FunFam" id="2.40.30.130:FF:000001">
    <property type="entry name" value="Alanine--tRNA ligase"/>
    <property type="match status" value="1"/>
</dbReference>
<dbReference type="FunFam" id="3.10.310.40:FF:000001">
    <property type="entry name" value="Alanine--tRNA ligase"/>
    <property type="match status" value="1"/>
</dbReference>
<dbReference type="FunFam" id="3.30.54.20:FF:000001">
    <property type="entry name" value="Alanine--tRNA ligase"/>
    <property type="match status" value="1"/>
</dbReference>
<dbReference type="FunFam" id="3.30.930.10:FF:000004">
    <property type="entry name" value="Alanine--tRNA ligase"/>
    <property type="match status" value="1"/>
</dbReference>
<dbReference type="FunFam" id="3.30.980.10:FF:000004">
    <property type="entry name" value="Alanine--tRNA ligase, cytoplasmic"/>
    <property type="match status" value="1"/>
</dbReference>
<dbReference type="Gene3D" id="2.40.30.130">
    <property type="match status" value="1"/>
</dbReference>
<dbReference type="Gene3D" id="3.10.310.40">
    <property type="match status" value="1"/>
</dbReference>
<dbReference type="Gene3D" id="3.30.54.20">
    <property type="match status" value="1"/>
</dbReference>
<dbReference type="Gene3D" id="6.10.250.550">
    <property type="match status" value="1"/>
</dbReference>
<dbReference type="Gene3D" id="3.30.930.10">
    <property type="entry name" value="Bira Bifunctional Protein, Domain 2"/>
    <property type="match status" value="1"/>
</dbReference>
<dbReference type="Gene3D" id="3.30.980.10">
    <property type="entry name" value="Threonyl-trna Synthetase, Chain A, domain 2"/>
    <property type="match status" value="1"/>
</dbReference>
<dbReference type="HAMAP" id="MF_00036_B">
    <property type="entry name" value="Ala_tRNA_synth_B"/>
    <property type="match status" value="1"/>
</dbReference>
<dbReference type="InterPro" id="IPR045864">
    <property type="entry name" value="aa-tRNA-synth_II/BPL/LPL"/>
</dbReference>
<dbReference type="InterPro" id="IPR002318">
    <property type="entry name" value="Ala-tRNA-lgiase_IIc"/>
</dbReference>
<dbReference type="InterPro" id="IPR018162">
    <property type="entry name" value="Ala-tRNA-ligase_IIc_anticod-bd"/>
</dbReference>
<dbReference type="InterPro" id="IPR018165">
    <property type="entry name" value="Ala-tRNA-synth_IIc_core"/>
</dbReference>
<dbReference type="InterPro" id="IPR018164">
    <property type="entry name" value="Ala-tRNA-synth_IIc_N"/>
</dbReference>
<dbReference type="InterPro" id="IPR050058">
    <property type="entry name" value="Ala-tRNA_ligase"/>
</dbReference>
<dbReference type="InterPro" id="IPR023033">
    <property type="entry name" value="Ala_tRNA_ligase_euk/bac"/>
</dbReference>
<dbReference type="InterPro" id="IPR003156">
    <property type="entry name" value="DHHA1_dom"/>
</dbReference>
<dbReference type="InterPro" id="IPR018163">
    <property type="entry name" value="Thr/Ala-tRNA-synth_IIc_edit"/>
</dbReference>
<dbReference type="InterPro" id="IPR009000">
    <property type="entry name" value="Transl_B-barrel_sf"/>
</dbReference>
<dbReference type="InterPro" id="IPR012947">
    <property type="entry name" value="tRNA_SAD"/>
</dbReference>
<dbReference type="NCBIfam" id="TIGR00344">
    <property type="entry name" value="alaS"/>
    <property type="match status" value="1"/>
</dbReference>
<dbReference type="PANTHER" id="PTHR11777:SF9">
    <property type="entry name" value="ALANINE--TRNA LIGASE, CYTOPLASMIC"/>
    <property type="match status" value="1"/>
</dbReference>
<dbReference type="PANTHER" id="PTHR11777">
    <property type="entry name" value="ALANYL-TRNA SYNTHETASE"/>
    <property type="match status" value="1"/>
</dbReference>
<dbReference type="Pfam" id="PF02272">
    <property type="entry name" value="DHHA1"/>
    <property type="match status" value="1"/>
</dbReference>
<dbReference type="Pfam" id="PF01411">
    <property type="entry name" value="tRNA-synt_2c"/>
    <property type="match status" value="1"/>
</dbReference>
<dbReference type="Pfam" id="PF07973">
    <property type="entry name" value="tRNA_SAD"/>
    <property type="match status" value="1"/>
</dbReference>
<dbReference type="PRINTS" id="PR00980">
    <property type="entry name" value="TRNASYNTHALA"/>
</dbReference>
<dbReference type="SMART" id="SM00863">
    <property type="entry name" value="tRNA_SAD"/>
    <property type="match status" value="1"/>
</dbReference>
<dbReference type="SUPFAM" id="SSF55681">
    <property type="entry name" value="Class II aaRS and biotin synthetases"/>
    <property type="match status" value="1"/>
</dbReference>
<dbReference type="SUPFAM" id="SSF101353">
    <property type="entry name" value="Putative anticodon-binding domain of alanyl-tRNA synthetase (AlaRS)"/>
    <property type="match status" value="1"/>
</dbReference>
<dbReference type="SUPFAM" id="SSF55186">
    <property type="entry name" value="ThrRS/AlaRS common domain"/>
    <property type="match status" value="1"/>
</dbReference>
<dbReference type="SUPFAM" id="SSF50447">
    <property type="entry name" value="Translation proteins"/>
    <property type="match status" value="1"/>
</dbReference>
<dbReference type="PROSITE" id="PS50860">
    <property type="entry name" value="AA_TRNA_LIGASE_II_ALA"/>
    <property type="match status" value="1"/>
</dbReference>
<proteinExistence type="inferred from homology"/>
<evidence type="ECO:0000255" key="1">
    <source>
        <dbReference type="HAMAP-Rule" id="MF_00036"/>
    </source>
</evidence>
<comment type="function">
    <text evidence="1">Catalyzes the attachment of alanine to tRNA(Ala) in a two-step reaction: alanine is first activated by ATP to form Ala-AMP and then transferred to the acceptor end of tRNA(Ala). Also edits incorrectly charged Ser-tRNA(Ala) and Gly-tRNA(Ala) via its editing domain.</text>
</comment>
<comment type="catalytic activity">
    <reaction evidence="1">
        <text>tRNA(Ala) + L-alanine + ATP = L-alanyl-tRNA(Ala) + AMP + diphosphate</text>
        <dbReference type="Rhea" id="RHEA:12540"/>
        <dbReference type="Rhea" id="RHEA-COMP:9657"/>
        <dbReference type="Rhea" id="RHEA-COMP:9923"/>
        <dbReference type="ChEBI" id="CHEBI:30616"/>
        <dbReference type="ChEBI" id="CHEBI:33019"/>
        <dbReference type="ChEBI" id="CHEBI:57972"/>
        <dbReference type="ChEBI" id="CHEBI:78442"/>
        <dbReference type="ChEBI" id="CHEBI:78497"/>
        <dbReference type="ChEBI" id="CHEBI:456215"/>
        <dbReference type="EC" id="6.1.1.7"/>
    </reaction>
</comment>
<comment type="cofactor">
    <cofactor evidence="1">
        <name>Zn(2+)</name>
        <dbReference type="ChEBI" id="CHEBI:29105"/>
    </cofactor>
    <text evidence="1">Binds 1 zinc ion per subunit.</text>
</comment>
<comment type="subcellular location">
    <subcellularLocation>
        <location evidence="1">Cytoplasm</location>
    </subcellularLocation>
</comment>
<comment type="domain">
    <text evidence="1">Consists of three domains; the N-terminal catalytic domain, the editing domain and the C-terminal C-Ala domain. The editing domain removes incorrectly charged amino acids, while the C-Ala domain, along with tRNA(Ala), serves as a bridge to cooperatively bring together the editing and aminoacylation centers thus stimulating deacylation of misacylated tRNAs.</text>
</comment>
<comment type="similarity">
    <text evidence="1">Belongs to the class-II aminoacyl-tRNA synthetase family.</text>
</comment>
<keyword id="KW-0030">Aminoacyl-tRNA synthetase</keyword>
<keyword id="KW-0067">ATP-binding</keyword>
<keyword id="KW-0963">Cytoplasm</keyword>
<keyword id="KW-0436">Ligase</keyword>
<keyword id="KW-0479">Metal-binding</keyword>
<keyword id="KW-0547">Nucleotide-binding</keyword>
<keyword id="KW-0648">Protein biosynthesis</keyword>
<keyword id="KW-0694">RNA-binding</keyword>
<keyword id="KW-0820">tRNA-binding</keyword>
<keyword id="KW-0862">Zinc</keyword>
<protein>
    <recommendedName>
        <fullName evidence="1">Alanine--tRNA ligase</fullName>
        <ecNumber evidence="1">6.1.1.7</ecNumber>
    </recommendedName>
    <alternativeName>
        <fullName evidence="1">Alanyl-tRNA synthetase</fullName>
        <shortName evidence="1">AlaRS</shortName>
    </alternativeName>
</protein>
<name>SYA_BURVG</name>